<proteinExistence type="evidence at protein level"/>
<evidence type="ECO:0000250" key="1">
    <source>
        <dbReference type="UniProtKB" id="P10688"/>
    </source>
</evidence>
<evidence type="ECO:0000250" key="2">
    <source>
        <dbReference type="UniProtKB" id="Q86YW0"/>
    </source>
</evidence>
<evidence type="ECO:0000255" key="3">
    <source>
        <dbReference type="PROSITE-ProRule" id="PRU00041"/>
    </source>
</evidence>
<evidence type="ECO:0000255" key="4">
    <source>
        <dbReference type="PROSITE-ProRule" id="PRU00270"/>
    </source>
</evidence>
<evidence type="ECO:0000255" key="5">
    <source>
        <dbReference type="PROSITE-ProRule" id="PRU00271"/>
    </source>
</evidence>
<evidence type="ECO:0000255" key="6">
    <source>
        <dbReference type="PROSITE-ProRule" id="PRU00448"/>
    </source>
</evidence>
<evidence type="ECO:0000269" key="7">
    <source>
    </source>
</evidence>
<evidence type="ECO:0000269" key="8">
    <source>
    </source>
</evidence>
<evidence type="ECO:0000269" key="9">
    <source>
    </source>
</evidence>
<evidence type="ECO:0000269" key="10">
    <source>
    </source>
</evidence>
<evidence type="ECO:0000269" key="11">
    <source>
    </source>
</evidence>
<evidence type="ECO:0000269" key="12">
    <source>
    </source>
</evidence>
<evidence type="ECO:0000269" key="13">
    <source>
    </source>
</evidence>
<evidence type="ECO:0000269" key="14">
    <source>
    </source>
</evidence>
<evidence type="ECO:0000269" key="15">
    <source>
    </source>
</evidence>
<evidence type="ECO:0000269" key="16">
    <source>
    </source>
</evidence>
<evidence type="ECO:0000269" key="17">
    <source>
    </source>
</evidence>
<evidence type="ECO:0000269" key="18">
    <source>
    </source>
</evidence>
<evidence type="ECO:0000269" key="19">
    <source>
    </source>
</evidence>
<evidence type="ECO:0000303" key="20">
    <source>
    </source>
</evidence>
<evidence type="ECO:0000303" key="21">
    <source>
    </source>
</evidence>
<evidence type="ECO:0000305" key="22"/>
<evidence type="ECO:0000312" key="23">
    <source>
        <dbReference type="EMBL" id="AAI06768.1"/>
    </source>
</evidence>
<evidence type="ECO:0000312" key="24">
    <source>
        <dbReference type="EMBL" id="AAM95914.1"/>
    </source>
</evidence>
<evidence type="ECO:0000312" key="25">
    <source>
        <dbReference type="MGI" id="MGI:2150308"/>
    </source>
</evidence>
<reference evidence="22 24" key="1">
    <citation type="journal article" date="2002" name="Development">
        <title>PLC zeta: a sperm-specific trigger of Ca(2+) oscillations in eggs and embryo development.</title>
        <authorList>
            <person name="Saunders C.M."/>
            <person name="Larman M.G."/>
            <person name="Parrington J."/>
            <person name="Cox L.J."/>
            <person name="Royse J."/>
            <person name="Blayney L.M."/>
            <person name="Swann K."/>
            <person name="Lai F.A."/>
        </authorList>
    </citation>
    <scope>NUCLEOTIDE SEQUENCE [MRNA] (ISOFORM 1)</scope>
    <scope>FUNCTION</scope>
    <scope>TISSUE SPECIFICITY</scope>
    <source>
        <strain evidence="24">C57BL/6J</strain>
        <tissue evidence="7">Spermatid</tissue>
    </source>
</reference>
<reference evidence="22" key="2">
    <citation type="journal article" date="2004" name="J. Biol. Chem.">
        <title>Recombinant phospholipase Czeta has high Ca2+ sensitivity and induces Ca2+ oscillations in mouse eggs.</title>
        <authorList>
            <person name="Kouchi Z."/>
            <person name="Fukami K."/>
            <person name="Shikano T."/>
            <person name="Oda S."/>
            <person name="Nakamura Y."/>
            <person name="Takenawa T."/>
            <person name="Miyazaki S."/>
        </authorList>
    </citation>
    <scope>NUCLEOTIDE SEQUENCE [MRNA] (ISOFORMS 1 AND 2)</scope>
    <scope>FUNCTION</scope>
    <scope>SUBCELLULAR LOCATION</scope>
    <source>
        <tissue evidence="8">Testis</tissue>
    </source>
</reference>
<reference evidence="22" key="3">
    <citation type="journal article" date="2005" name="Science">
        <title>The transcriptional landscape of the mammalian genome.</title>
        <authorList>
            <person name="Carninci P."/>
            <person name="Kasukawa T."/>
            <person name="Katayama S."/>
            <person name="Gough J."/>
            <person name="Frith M.C."/>
            <person name="Maeda N."/>
            <person name="Oyama R."/>
            <person name="Ravasi T."/>
            <person name="Lenhard B."/>
            <person name="Wells C."/>
            <person name="Kodzius R."/>
            <person name="Shimokawa K."/>
            <person name="Bajic V.B."/>
            <person name="Brenner S.E."/>
            <person name="Batalov S."/>
            <person name="Forrest A.R."/>
            <person name="Zavolan M."/>
            <person name="Davis M.J."/>
            <person name="Wilming L.G."/>
            <person name="Aidinis V."/>
            <person name="Allen J.E."/>
            <person name="Ambesi-Impiombato A."/>
            <person name="Apweiler R."/>
            <person name="Aturaliya R.N."/>
            <person name="Bailey T.L."/>
            <person name="Bansal M."/>
            <person name="Baxter L."/>
            <person name="Beisel K.W."/>
            <person name="Bersano T."/>
            <person name="Bono H."/>
            <person name="Chalk A.M."/>
            <person name="Chiu K.P."/>
            <person name="Choudhary V."/>
            <person name="Christoffels A."/>
            <person name="Clutterbuck D.R."/>
            <person name="Crowe M.L."/>
            <person name="Dalla E."/>
            <person name="Dalrymple B.P."/>
            <person name="de Bono B."/>
            <person name="Della Gatta G."/>
            <person name="di Bernardo D."/>
            <person name="Down T."/>
            <person name="Engstrom P."/>
            <person name="Fagiolini M."/>
            <person name="Faulkner G."/>
            <person name="Fletcher C.F."/>
            <person name="Fukushima T."/>
            <person name="Furuno M."/>
            <person name="Futaki S."/>
            <person name="Gariboldi M."/>
            <person name="Georgii-Hemming P."/>
            <person name="Gingeras T.R."/>
            <person name="Gojobori T."/>
            <person name="Green R.E."/>
            <person name="Gustincich S."/>
            <person name="Harbers M."/>
            <person name="Hayashi Y."/>
            <person name="Hensch T.K."/>
            <person name="Hirokawa N."/>
            <person name="Hill D."/>
            <person name="Huminiecki L."/>
            <person name="Iacono M."/>
            <person name="Ikeo K."/>
            <person name="Iwama A."/>
            <person name="Ishikawa T."/>
            <person name="Jakt M."/>
            <person name="Kanapin A."/>
            <person name="Katoh M."/>
            <person name="Kawasawa Y."/>
            <person name="Kelso J."/>
            <person name="Kitamura H."/>
            <person name="Kitano H."/>
            <person name="Kollias G."/>
            <person name="Krishnan S.P."/>
            <person name="Kruger A."/>
            <person name="Kummerfeld S.K."/>
            <person name="Kurochkin I.V."/>
            <person name="Lareau L.F."/>
            <person name="Lazarevic D."/>
            <person name="Lipovich L."/>
            <person name="Liu J."/>
            <person name="Liuni S."/>
            <person name="McWilliam S."/>
            <person name="Madan Babu M."/>
            <person name="Madera M."/>
            <person name="Marchionni L."/>
            <person name="Matsuda H."/>
            <person name="Matsuzawa S."/>
            <person name="Miki H."/>
            <person name="Mignone F."/>
            <person name="Miyake S."/>
            <person name="Morris K."/>
            <person name="Mottagui-Tabar S."/>
            <person name="Mulder N."/>
            <person name="Nakano N."/>
            <person name="Nakauchi H."/>
            <person name="Ng P."/>
            <person name="Nilsson R."/>
            <person name="Nishiguchi S."/>
            <person name="Nishikawa S."/>
            <person name="Nori F."/>
            <person name="Ohara O."/>
            <person name="Okazaki Y."/>
            <person name="Orlando V."/>
            <person name="Pang K.C."/>
            <person name="Pavan W.J."/>
            <person name="Pavesi G."/>
            <person name="Pesole G."/>
            <person name="Petrovsky N."/>
            <person name="Piazza S."/>
            <person name="Reed J."/>
            <person name="Reid J.F."/>
            <person name="Ring B.Z."/>
            <person name="Ringwald M."/>
            <person name="Rost B."/>
            <person name="Ruan Y."/>
            <person name="Salzberg S.L."/>
            <person name="Sandelin A."/>
            <person name="Schneider C."/>
            <person name="Schoenbach C."/>
            <person name="Sekiguchi K."/>
            <person name="Semple C.A."/>
            <person name="Seno S."/>
            <person name="Sessa L."/>
            <person name="Sheng Y."/>
            <person name="Shibata Y."/>
            <person name="Shimada H."/>
            <person name="Shimada K."/>
            <person name="Silva D."/>
            <person name="Sinclair B."/>
            <person name="Sperling S."/>
            <person name="Stupka E."/>
            <person name="Sugiura K."/>
            <person name="Sultana R."/>
            <person name="Takenaka Y."/>
            <person name="Taki K."/>
            <person name="Tammoja K."/>
            <person name="Tan S.L."/>
            <person name="Tang S."/>
            <person name="Taylor M.S."/>
            <person name="Tegner J."/>
            <person name="Teichmann S.A."/>
            <person name="Ueda H.R."/>
            <person name="van Nimwegen E."/>
            <person name="Verardo R."/>
            <person name="Wei C.L."/>
            <person name="Yagi K."/>
            <person name="Yamanishi H."/>
            <person name="Zabarovsky E."/>
            <person name="Zhu S."/>
            <person name="Zimmer A."/>
            <person name="Hide W."/>
            <person name="Bult C."/>
            <person name="Grimmond S.M."/>
            <person name="Teasdale R.D."/>
            <person name="Liu E.T."/>
            <person name="Brusic V."/>
            <person name="Quackenbush J."/>
            <person name="Wahlestedt C."/>
            <person name="Mattick J.S."/>
            <person name="Hume D.A."/>
            <person name="Kai C."/>
            <person name="Sasaki D."/>
            <person name="Tomaru Y."/>
            <person name="Fukuda S."/>
            <person name="Kanamori-Katayama M."/>
            <person name="Suzuki M."/>
            <person name="Aoki J."/>
            <person name="Arakawa T."/>
            <person name="Iida J."/>
            <person name="Imamura K."/>
            <person name="Itoh M."/>
            <person name="Kato T."/>
            <person name="Kawaji H."/>
            <person name="Kawagashira N."/>
            <person name="Kawashima T."/>
            <person name="Kojima M."/>
            <person name="Kondo S."/>
            <person name="Konno H."/>
            <person name="Nakano K."/>
            <person name="Ninomiya N."/>
            <person name="Nishio T."/>
            <person name="Okada M."/>
            <person name="Plessy C."/>
            <person name="Shibata K."/>
            <person name="Shiraki T."/>
            <person name="Suzuki S."/>
            <person name="Tagami M."/>
            <person name="Waki K."/>
            <person name="Watahiki A."/>
            <person name="Okamura-Oho Y."/>
            <person name="Suzuki H."/>
            <person name="Kawai J."/>
            <person name="Hayashizaki Y."/>
        </authorList>
    </citation>
    <scope>NUCLEOTIDE SEQUENCE [LARGE SCALE MRNA] (ISOFORM 2)</scope>
    <source>
        <tissue evidence="15">Testis</tissue>
    </source>
</reference>
<reference evidence="22 23" key="4">
    <citation type="journal article" date="2004" name="Genome Res.">
        <title>The status, quality, and expansion of the NIH full-length cDNA project: the Mammalian Gene Collection (MGC).</title>
        <authorList>
            <consortium name="The MGC Project Team"/>
        </authorList>
    </citation>
    <scope>NUCLEOTIDE SEQUENCE [LARGE SCALE MRNA] (ISOFORM 1)</scope>
</reference>
<reference evidence="22" key="5">
    <citation type="journal article" date="2004" name="Dev. Biol.">
        <title>Mammalian phospholipase Czeta induces oocyte activation from the sperm perinuclear matrix.</title>
        <authorList>
            <person name="Fujimoto S."/>
            <person name="Yoshida N."/>
            <person name="Fukui T."/>
            <person name="Amanai M."/>
            <person name="Isobe T."/>
            <person name="Itagaki C."/>
            <person name="Izumi T."/>
            <person name="Perry A.C.F."/>
        </authorList>
    </citation>
    <scope>FUNCTION</scope>
    <scope>SUBCELLULAR LOCATION</scope>
</reference>
<reference evidence="22" key="6">
    <citation type="journal article" date="2004" name="J. Cell Sci.">
        <title>Cell cycle-dependent Ca2+ oscillations in mouse embryos are regulated by nuclear targeting of PLCzeta.</title>
        <authorList>
            <person name="Larman M.G."/>
            <person name="Saunders C.M."/>
            <person name="Carroll J."/>
            <person name="Lai F.A."/>
            <person name="Swann K."/>
        </authorList>
    </citation>
    <scope>FUNCTION</scope>
    <scope>SUBCELLULAR LOCATION</scope>
    <scope>MUTAGENESIS OF LYS-377</scope>
</reference>
<reference evidence="22" key="7">
    <citation type="journal article" date="2005" name="Biochem. Biophys. Res. Commun.">
        <title>Nuclear translocation of phospholipase C-zeta, an egg-activating factor, during early embryonic development.</title>
        <authorList>
            <person name="Sone Y."/>
            <person name="Ito M."/>
            <person name="Shirakawa H."/>
            <person name="Shikano T."/>
            <person name="Takeuchi H."/>
            <person name="Kinoshita K."/>
            <person name="Miyazaki S."/>
        </authorList>
    </citation>
    <scope>SUBCELLULAR LOCATION</scope>
</reference>
<reference evidence="22" key="8">
    <citation type="journal article" date="2005" name="J. Biol. Chem.">
        <title>The role of EF-hand domains and C2 domain in regulation of enzymatic activity of phospholipase Czeta.</title>
        <authorList>
            <person name="Kouchi Z."/>
            <person name="Shikano T."/>
            <person name="Nakamura Y."/>
            <person name="Shirakawa H."/>
            <person name="Fukami K."/>
            <person name="Miyazaki S."/>
        </authorList>
    </citation>
    <scope>FUNCTION</scope>
    <scope>COFACTOR</scope>
    <scope>INTERACTION WITH PTDINS(3)P AND PTDINS(5)P</scope>
    <scope>DOMAIN</scope>
</reference>
<reference evidence="22" key="9">
    <citation type="journal article" date="2005" name="J. Biol. Chem.">
        <title>Role of phospholipase C-zeta domains in Ca2+-dependent phosphatidylinositol 4,5-bisphosphate hydrolysis and cytoplasmic Ca2+ oscillations.</title>
        <authorList>
            <person name="Nomikos M."/>
            <person name="Blayney L.M."/>
            <person name="Larman M.G."/>
            <person name="Campbell K."/>
            <person name="Rossbach A."/>
            <person name="Saunders C.M."/>
            <person name="Swann K."/>
            <person name="Lai F.A."/>
        </authorList>
    </citation>
    <scope>DOMAIN</scope>
    <scope>CATALYTIC ACTIVITY</scope>
    <scope>FUNCTION</scope>
</reference>
<reference evidence="22" key="10">
    <citation type="journal article" date="2006" name="J. Biol. Chem.">
        <title>The role of X/Y linker region and N-terminal EF-hand domain in nuclear translocation and Ca2+ oscillation-inducing activities of phospholipase Czeta, a mammalian egg-activating factor.</title>
        <authorList>
            <person name="Kuroda K."/>
            <person name="Ito M."/>
            <person name="Shikano T."/>
            <person name="Awaji T."/>
            <person name="Yoda A."/>
            <person name="Takeuchi H."/>
            <person name="Kinoshita K."/>
            <person name="Miyazaki S."/>
        </authorList>
    </citation>
    <scope>FUNCTION</scope>
    <scope>DOMAIN</scope>
    <scope>MUTAGENESIS OF ASP-210; LYS-299; LYS-301; ARG-376; LYS-377; ARG-378; LYS-379 AND LYS-381</scope>
</reference>
<reference evidence="22" key="11">
    <citation type="journal article" date="2007" name="Development">
        <title>Broad, ectopic expression of the sperm protein PLCZ1 induces parthenogenesis and ovarian tumours in mice.</title>
        <authorList>
            <person name="Yoshida N."/>
            <person name="Amanai M."/>
            <person name="Fukui T."/>
            <person name="Kajikawa E."/>
            <person name="Brahmajosyula M."/>
            <person name="Iwahori A."/>
            <person name="Nakano Y."/>
            <person name="Shoji S."/>
            <person name="Diebold J."/>
            <person name="Hessel H."/>
            <person name="Huss R."/>
            <person name="Perry A.C."/>
        </authorList>
    </citation>
    <scope>FUNCTION</scope>
    <scope>OVEREXPRESSION</scope>
</reference>
<reference evidence="22" key="12">
    <citation type="journal article" date="2007" name="Dev. Biol.">
        <title>Proteolytic processing of phospholipase Czeta and [Ca2+]i oscillations during mammalian fertilization.</title>
        <authorList>
            <person name="Kurokawa M."/>
            <person name="Yoon S.Y."/>
            <person name="Alfandari D."/>
            <person name="Fukami K."/>
            <person name="Sato K."/>
            <person name="Fissore R.A."/>
        </authorList>
    </citation>
    <scope>FUNCTION</scope>
    <scope>DOMAIN</scope>
</reference>
<reference evidence="22" key="13">
    <citation type="journal article" date="2008" name="Biol. Reprod.">
        <title>Difference in Ca2+ oscillation-inducing activity and nuclear translocation ability of PLCZ1, an egg-activating sperm factor candidate, between mouse, rat, human, and medaka fish.</title>
        <authorList>
            <person name="Ito M."/>
            <person name="Shikano T."/>
            <person name="Oda S."/>
            <person name="Horiguchi T."/>
            <person name="Tanimoto S."/>
            <person name="Awaji T."/>
            <person name="Mitani H."/>
            <person name="Miyazaki S."/>
        </authorList>
    </citation>
    <scope>FUNCTION</scope>
    <scope>SUBCELLULAR LOCATION</scope>
</reference>
<feature type="chain" id="PRO_0000347246" description="1-phosphatidylinositol 4,5-bisphosphate phosphodiesterase zeta-1">
    <location>
        <begin position="1"/>
        <end position="647"/>
    </location>
</feature>
<feature type="domain" description="EF-hand" evidence="6">
    <location>
        <begin position="43"/>
        <end position="78"/>
    </location>
</feature>
<feature type="domain" description="PI-PLC X-box" evidence="4">
    <location>
        <begin position="163"/>
        <end position="307"/>
    </location>
</feature>
<feature type="domain" description="PI-PLC Y-box" evidence="5">
    <location>
        <begin position="386"/>
        <end position="502"/>
    </location>
</feature>
<feature type="domain" description="C2" evidence="3">
    <location>
        <begin position="502"/>
        <end position="627"/>
    </location>
</feature>
<feature type="active site" evidence="1 4">
    <location>
        <position position="178"/>
    </location>
</feature>
<feature type="active site" evidence="1 4">
    <location>
        <position position="223"/>
    </location>
</feature>
<feature type="splice variant" id="VSP_052863" description="In isoform 2." evidence="20 21">
    <location>
        <begin position="1"/>
        <end position="110"/>
    </location>
</feature>
<feature type="mutagenesis site" description="Defective in Ca(2+) oscillation activity and shows slower nuclear translocation." evidence="16">
    <original>D</original>
    <variation>R</variation>
    <location>
        <position position="210"/>
    </location>
</feature>
<feature type="mutagenesis site" description="Defective in Ca(2+) oscillation activity and loss of nuclear translocation." evidence="16">
    <original>K</original>
    <variation>E</variation>
    <location>
        <position position="299"/>
    </location>
</feature>
<feature type="mutagenesis site" description="Defective in Ca(2+) oscillation activity and loss of nuclear translocation." evidence="16">
    <original>K</original>
    <variation>E</variation>
    <location>
        <position position="301"/>
    </location>
</feature>
<feature type="mutagenesis site" description="Abolishes nuclear translocation." evidence="16">
    <original>R</original>
    <variation>E</variation>
    <location>
        <position position="376"/>
    </location>
</feature>
<feature type="mutagenesis site" description="Abolishes nuclear translocation. Prolongs Ca(2+) oscillations allowing them to occur during interphase." evidence="9 16">
    <original>K</original>
    <variation>E</variation>
    <location>
        <position position="377"/>
    </location>
</feature>
<feature type="mutagenesis site" description="Abolishes nuclear translocation." evidence="16">
    <original>R</original>
    <variation>E</variation>
    <location>
        <position position="378"/>
    </location>
</feature>
<feature type="mutagenesis site" description="Abolishes nuclear translocation." evidence="16">
    <original>K</original>
    <variation>E</variation>
    <location>
        <position position="379"/>
    </location>
</feature>
<feature type="mutagenesis site" description="Abolishes nuclear translocation." evidence="16">
    <original>K</original>
    <variation>E</variation>
    <location>
        <position position="381"/>
    </location>
</feature>
<feature type="sequence conflict" description="In Ref. 4; AAI06768." evidence="22" ref="4">
    <original>Q</original>
    <variation>H</variation>
    <location>
        <position position="58"/>
    </location>
</feature>
<feature type="sequence conflict" description="In Ref. 4; AAI06768." evidence="22" ref="4">
    <original>R</original>
    <variation>K</variation>
    <location>
        <position position="360"/>
    </location>
</feature>
<name>PLCZ1_MOUSE</name>
<protein>
    <recommendedName>
        <fullName>1-phosphatidylinositol 4,5-bisphosphate phosphodiesterase zeta-1</fullName>
        <ecNumber>3.1.4.11</ecNumber>
    </recommendedName>
    <alternativeName>
        <fullName>Phosphoinositide phospholipase C-zeta-1</fullName>
    </alternativeName>
    <alternativeName>
        <fullName evidence="2">Phospholipase C-zeta-1</fullName>
        <shortName evidence="2">PLC-zeta-1</shortName>
    </alternativeName>
</protein>
<accession>Q8K4D7</accession>
<accession>Q3KPE5</accession>
<sequence length="647" mass="74614">MESQLHELAEARWFLSKVQDDFRGGKINVEITHKLLEKLDFPCHFAHVKHIFKENDRQNQGRITIEEFRAIYRCIVHREEITEIFNTYTENRKILSENSLIEFLTQEQYEMEIDHSDSVEIINKYEPIEEVKGERQMSIEGFARYMFSSECLLFKENCKTVYQDMNHPLSDYFISSSHNTYLISDQILGPSDIWGYVSALVKGCRCLEIDCWDGSQNEPIVYHGYTFTSKLLFKTVVQAINKYAFVTSDYPVVLSLENHCSPGQQEVMASILQSTFGDFLLSDMLEEFPDTLPSPEALKFKILVKNRKVGTLSETHERIGTDKSGQVLEWKEVIYEDGDEDSGMDPETWDVFLSRIKEEREADPSTLSGIAGVKKRKRKMKIAMALSDLVIYTKAEKFRNFQYSRVYQQFNETNSIGESRARKLSKLRVHEFIFHTAAFITRVYPKMMRADSSNFNPQEFWNVGCQMVALNFQTPGLPMDLQNGKFLDNGGSGYILKPDILRDTTLGFNPNEPEYDDHPVTLTIRIISGIQLPVSSSSNTPDIVVIIEVYGVPNDHVKQQTRVVKNNAFSPKWNETFTFLIQVPELALIRFVVETQQGLLSGNELLGQYTLPVLCMNKGYRRVPLFSKSGANLEPSSLFIYVWYFRE</sequence>
<dbReference type="EC" id="3.1.4.11"/>
<dbReference type="EMBL" id="AF435950">
    <property type="protein sequence ID" value="AAM95914.1"/>
    <property type="molecule type" value="mRNA"/>
</dbReference>
<dbReference type="EMBL" id="AK006672">
    <property type="status" value="NOT_ANNOTATED_CDS"/>
    <property type="molecule type" value="mRNA"/>
</dbReference>
<dbReference type="EMBL" id="BC106767">
    <property type="protein sequence ID" value="AAI06768.1"/>
    <property type="molecule type" value="mRNA"/>
</dbReference>
<dbReference type="CCDS" id="CCDS20671.1">
    <molecule id="Q8K4D7-1"/>
</dbReference>
<dbReference type="RefSeq" id="NP_473407.2">
    <molecule id="Q8K4D7-1"/>
    <property type="nucleotide sequence ID" value="NM_054066.4"/>
</dbReference>
<dbReference type="RefSeq" id="XP_030110971.1">
    <molecule id="Q8K4D7-2"/>
    <property type="nucleotide sequence ID" value="XM_030255111.2"/>
</dbReference>
<dbReference type="SMR" id="Q8K4D7"/>
<dbReference type="BioGRID" id="227896">
    <property type="interactions" value="1"/>
</dbReference>
<dbReference type="FunCoup" id="Q8K4D7">
    <property type="interactions" value="1108"/>
</dbReference>
<dbReference type="STRING" id="10090.ENSMUSP00000032356"/>
<dbReference type="SwissLipids" id="SLP:000001073"/>
<dbReference type="iPTMnet" id="Q8K4D7"/>
<dbReference type="PhosphoSitePlus" id="Q8K4D7"/>
<dbReference type="jPOST" id="Q8K4D7"/>
<dbReference type="PaxDb" id="10090-ENSMUSP00000032356"/>
<dbReference type="ProteomicsDB" id="288231">
    <molecule id="Q8K4D7-1"/>
</dbReference>
<dbReference type="ProteomicsDB" id="288232">
    <molecule id="Q8K4D7-2"/>
</dbReference>
<dbReference type="Antibodypedia" id="52401">
    <property type="antibodies" value="117 antibodies from 18 providers"/>
</dbReference>
<dbReference type="DNASU" id="114875"/>
<dbReference type="Ensembl" id="ENSMUST00000032356.13">
    <molecule id="Q8K4D7-1"/>
    <property type="protein sequence ID" value="ENSMUSP00000032356.7"/>
    <property type="gene ID" value="ENSMUSG00000030230.16"/>
</dbReference>
<dbReference type="GeneID" id="114875"/>
<dbReference type="KEGG" id="mmu:114875"/>
<dbReference type="UCSC" id="uc012evc.2">
    <molecule id="Q8K4D7-1"/>
    <property type="organism name" value="mouse"/>
</dbReference>
<dbReference type="AGR" id="MGI:2150308"/>
<dbReference type="CTD" id="89869"/>
<dbReference type="MGI" id="MGI:2150308">
    <property type="gene designation" value="Plcz1"/>
</dbReference>
<dbReference type="VEuPathDB" id="HostDB:ENSMUSG00000030230"/>
<dbReference type="eggNOG" id="KOG0169">
    <property type="taxonomic scope" value="Eukaryota"/>
</dbReference>
<dbReference type="GeneTree" id="ENSGT00940000159950"/>
<dbReference type="HOGENOM" id="CLU_002738_0_3_1"/>
<dbReference type="InParanoid" id="Q8K4D7"/>
<dbReference type="OMA" id="DAWDNDE"/>
<dbReference type="OrthoDB" id="269822at2759"/>
<dbReference type="PhylomeDB" id="Q8K4D7"/>
<dbReference type="TreeFam" id="TF313216"/>
<dbReference type="BRENDA" id="3.1.4.11">
    <property type="organism ID" value="3474"/>
</dbReference>
<dbReference type="Reactome" id="R-MMU-1855204">
    <property type="pathway name" value="Synthesis of IP3 and IP4 in the cytosol"/>
</dbReference>
<dbReference type="BioGRID-ORCS" id="114875">
    <property type="hits" value="0 hits in 78 CRISPR screens"/>
</dbReference>
<dbReference type="PRO" id="PR:Q8K4D7"/>
<dbReference type="Proteomes" id="UP000000589">
    <property type="component" value="Chromosome 6"/>
</dbReference>
<dbReference type="RNAct" id="Q8K4D7">
    <property type="molecule type" value="protein"/>
</dbReference>
<dbReference type="Bgee" id="ENSMUSG00000030230">
    <property type="expression patterns" value="Expressed in spermatid and 28 other cell types or tissues"/>
</dbReference>
<dbReference type="ExpressionAtlas" id="Q8K4D7">
    <property type="expression patterns" value="baseline and differential"/>
</dbReference>
<dbReference type="GO" id="GO:0005730">
    <property type="term" value="C:nucleolus"/>
    <property type="evidence" value="ECO:0000314"/>
    <property type="project" value="UniProtKB"/>
</dbReference>
<dbReference type="GO" id="GO:0005654">
    <property type="term" value="C:nucleoplasm"/>
    <property type="evidence" value="ECO:0000314"/>
    <property type="project" value="UniProtKB"/>
</dbReference>
<dbReference type="GO" id="GO:0048471">
    <property type="term" value="C:perinuclear region of cytoplasm"/>
    <property type="evidence" value="ECO:0007669"/>
    <property type="project" value="UniProtKB-SubCell"/>
</dbReference>
<dbReference type="GO" id="GO:0045120">
    <property type="term" value="C:pronucleus"/>
    <property type="evidence" value="ECO:0000314"/>
    <property type="project" value="UniProtKB"/>
</dbReference>
<dbReference type="GO" id="GO:0061827">
    <property type="term" value="C:sperm head"/>
    <property type="evidence" value="ECO:0007669"/>
    <property type="project" value="Ensembl"/>
</dbReference>
<dbReference type="GO" id="GO:0005509">
    <property type="term" value="F:calcium ion binding"/>
    <property type="evidence" value="ECO:0007669"/>
    <property type="project" value="InterPro"/>
</dbReference>
<dbReference type="GO" id="GO:0032266">
    <property type="term" value="F:phosphatidylinositol-3-phosphate binding"/>
    <property type="evidence" value="ECO:0007669"/>
    <property type="project" value="Ensembl"/>
</dbReference>
<dbReference type="GO" id="GO:0005546">
    <property type="term" value="F:phosphatidylinositol-4,5-bisphosphate binding"/>
    <property type="evidence" value="ECO:0007669"/>
    <property type="project" value="Ensembl"/>
</dbReference>
<dbReference type="GO" id="GO:0004435">
    <property type="term" value="F:phosphatidylinositol-4,5-bisphosphate phospholipase C activity"/>
    <property type="evidence" value="ECO:0000314"/>
    <property type="project" value="CACAO"/>
</dbReference>
<dbReference type="GO" id="GO:0010314">
    <property type="term" value="F:phosphatidylinositol-5-phosphate binding"/>
    <property type="evidence" value="ECO:0007669"/>
    <property type="project" value="Ensembl"/>
</dbReference>
<dbReference type="GO" id="GO:0004629">
    <property type="term" value="F:phospholipase C activity"/>
    <property type="evidence" value="ECO:0000314"/>
    <property type="project" value="MGI"/>
</dbReference>
<dbReference type="GO" id="GO:0006816">
    <property type="term" value="P:calcium ion transport"/>
    <property type="evidence" value="ECO:0000314"/>
    <property type="project" value="MGI"/>
</dbReference>
<dbReference type="GO" id="GO:0007343">
    <property type="term" value="P:egg activation"/>
    <property type="evidence" value="ECO:0000314"/>
    <property type="project" value="MGI"/>
</dbReference>
<dbReference type="GO" id="GO:0035556">
    <property type="term" value="P:intracellular signal transduction"/>
    <property type="evidence" value="ECO:0007669"/>
    <property type="project" value="InterPro"/>
</dbReference>
<dbReference type="GO" id="GO:0016042">
    <property type="term" value="P:lipid catabolic process"/>
    <property type="evidence" value="ECO:0007669"/>
    <property type="project" value="UniProtKB-KW"/>
</dbReference>
<dbReference type="GO" id="GO:0060470">
    <property type="term" value="P:positive regulation of cytosolic calcium ion concentration involved in egg activation"/>
    <property type="evidence" value="ECO:0000314"/>
    <property type="project" value="UniProtKB"/>
</dbReference>
<dbReference type="CDD" id="cd00275">
    <property type="entry name" value="C2_PLC_like"/>
    <property type="match status" value="1"/>
</dbReference>
<dbReference type="FunFam" id="1.10.238.10:FF:000005">
    <property type="entry name" value="Phosphoinositide phospholipase C"/>
    <property type="match status" value="1"/>
</dbReference>
<dbReference type="FunFam" id="2.60.40.150:FF:000147">
    <property type="entry name" value="Phosphoinositide phospholipase C"/>
    <property type="match status" value="1"/>
</dbReference>
<dbReference type="Gene3D" id="2.60.40.150">
    <property type="entry name" value="C2 domain"/>
    <property type="match status" value="1"/>
</dbReference>
<dbReference type="Gene3D" id="1.10.238.10">
    <property type="entry name" value="EF-hand"/>
    <property type="match status" value="1"/>
</dbReference>
<dbReference type="Gene3D" id="3.20.20.190">
    <property type="entry name" value="Phosphatidylinositol (PI) phosphodiesterase"/>
    <property type="match status" value="1"/>
</dbReference>
<dbReference type="InterPro" id="IPR000008">
    <property type="entry name" value="C2_dom"/>
</dbReference>
<dbReference type="InterPro" id="IPR035892">
    <property type="entry name" value="C2_domain_sf"/>
</dbReference>
<dbReference type="InterPro" id="IPR011992">
    <property type="entry name" value="EF-hand-dom_pair"/>
</dbReference>
<dbReference type="InterPro" id="IPR002048">
    <property type="entry name" value="EF_hand_dom"/>
</dbReference>
<dbReference type="InterPro" id="IPR001192">
    <property type="entry name" value="PI-PLC_fam"/>
</dbReference>
<dbReference type="InterPro" id="IPR017946">
    <property type="entry name" value="PLC-like_Pdiesterase_TIM-brl"/>
</dbReference>
<dbReference type="InterPro" id="IPR015359">
    <property type="entry name" value="PLC_EF-hand-like"/>
</dbReference>
<dbReference type="InterPro" id="IPR000909">
    <property type="entry name" value="PLipase_C_PInositol-sp_X_dom"/>
</dbReference>
<dbReference type="InterPro" id="IPR001711">
    <property type="entry name" value="PLipase_C_Pinositol-sp_Y"/>
</dbReference>
<dbReference type="PANTHER" id="PTHR10336:SF29">
    <property type="entry name" value="1-PHOSPHATIDYLINOSITOL 4,5-BISPHOSPHATE PHOSPHODIESTERASE ZETA-1"/>
    <property type="match status" value="1"/>
</dbReference>
<dbReference type="PANTHER" id="PTHR10336">
    <property type="entry name" value="PHOSPHOINOSITIDE-SPECIFIC PHOSPHOLIPASE C FAMILY PROTEIN"/>
    <property type="match status" value="1"/>
</dbReference>
<dbReference type="Pfam" id="PF00168">
    <property type="entry name" value="C2"/>
    <property type="match status" value="1"/>
</dbReference>
<dbReference type="Pfam" id="PF09279">
    <property type="entry name" value="EF-hand_like"/>
    <property type="match status" value="1"/>
</dbReference>
<dbReference type="Pfam" id="PF00388">
    <property type="entry name" value="PI-PLC-X"/>
    <property type="match status" value="1"/>
</dbReference>
<dbReference type="Pfam" id="PF00387">
    <property type="entry name" value="PI-PLC-Y"/>
    <property type="match status" value="1"/>
</dbReference>
<dbReference type="PRINTS" id="PR00390">
    <property type="entry name" value="PHPHLIPASEC"/>
</dbReference>
<dbReference type="SMART" id="SM00239">
    <property type="entry name" value="C2"/>
    <property type="match status" value="1"/>
</dbReference>
<dbReference type="SMART" id="SM00148">
    <property type="entry name" value="PLCXc"/>
    <property type="match status" value="1"/>
</dbReference>
<dbReference type="SMART" id="SM00149">
    <property type="entry name" value="PLCYc"/>
    <property type="match status" value="1"/>
</dbReference>
<dbReference type="SUPFAM" id="SSF49562">
    <property type="entry name" value="C2 domain (Calcium/lipid-binding domain, CaLB)"/>
    <property type="match status" value="1"/>
</dbReference>
<dbReference type="SUPFAM" id="SSF47473">
    <property type="entry name" value="EF-hand"/>
    <property type="match status" value="1"/>
</dbReference>
<dbReference type="SUPFAM" id="SSF51695">
    <property type="entry name" value="PLC-like phosphodiesterases"/>
    <property type="match status" value="1"/>
</dbReference>
<dbReference type="PROSITE" id="PS50004">
    <property type="entry name" value="C2"/>
    <property type="match status" value="1"/>
</dbReference>
<dbReference type="PROSITE" id="PS50222">
    <property type="entry name" value="EF_HAND_2"/>
    <property type="match status" value="1"/>
</dbReference>
<dbReference type="PROSITE" id="PS50007">
    <property type="entry name" value="PIPLC_X_DOMAIN"/>
    <property type="match status" value="1"/>
</dbReference>
<dbReference type="PROSITE" id="PS50008">
    <property type="entry name" value="PIPLC_Y_DOMAIN"/>
    <property type="match status" value="1"/>
</dbReference>
<gene>
    <name evidence="25" type="primary">Plcz1</name>
</gene>
<comment type="function">
    <text evidence="2 7 8 9 10 12 14 16 17 18 19">The production of the second messenger molecules diacylglycerol (DAG) and inositol 1,4,5-trisphosphate (IP3) is mediated by activated phosphatidylinositol-specific phospholipase C enzymes. In vitro, hydrolyzes PtdIns(4,5)P2 in a Ca(2+)-dependent manner. Triggers intracellular Ca(2+) oscillations in oocytes solely during M phase and is involved in inducing oocyte activation and initiating embryonic development up to the blastocyst stage. Is therefore a strong candidate for the egg-activating soluble sperm factor that is transferred from the sperm into the egg cytoplasm following gamete membrane fusion. May exert an inhibitory effect on phospholipase-C-coupled processes that depend on calcium ions and protein kinase C, including CFTR trafficking and function.</text>
</comment>
<comment type="catalytic activity">
    <reaction evidence="14">
        <text>a 1,2-diacyl-sn-glycero-3-phospho-(1D-myo-inositol-4,5-bisphosphate) + H2O = 1D-myo-inositol 1,4,5-trisphosphate + a 1,2-diacyl-sn-glycerol + H(+)</text>
        <dbReference type="Rhea" id="RHEA:33179"/>
        <dbReference type="ChEBI" id="CHEBI:15377"/>
        <dbReference type="ChEBI" id="CHEBI:15378"/>
        <dbReference type="ChEBI" id="CHEBI:17815"/>
        <dbReference type="ChEBI" id="CHEBI:58456"/>
        <dbReference type="ChEBI" id="CHEBI:203600"/>
        <dbReference type="EC" id="3.1.4.11"/>
    </reaction>
    <physiologicalReaction direction="left-to-right" evidence="14">
        <dbReference type="Rhea" id="RHEA:33180"/>
    </physiologicalReaction>
</comment>
<comment type="cofactor">
    <cofactor evidence="12 14">
        <name>Ca(2+)</name>
        <dbReference type="ChEBI" id="CHEBI:29108"/>
    </cofactor>
</comment>
<comment type="subunit">
    <text evidence="12">Interacts via its C2 domain with PtdIns(3)P and, to a lesser extent, PtdIns(5)P in vitro.</text>
</comment>
<comment type="subcellular location">
    <subcellularLocation>
        <location evidence="8 9 10 13 19">Nucleus</location>
    </subcellularLocation>
    <subcellularLocation>
        <location evidence="8 9 10 13 19">Cytoplasm</location>
        <location evidence="8 9 10 13 19">Perinuclear region</location>
    </subcellularLocation>
    <text evidence="8 9 10 13 19">Exhibits alternative cytoplasmic/nuclear localization during development. Translocates from the pronucleus into cytoplasm upon nuclear envelope breakdown for mitosis and localizes again to the pronuclei at interphase following meiosis and mitosis.</text>
</comment>
<comment type="alternative products">
    <event type="alternative splicing"/>
    <isoform>
        <id>Q8K4D7-1</id>
        <name evidence="7 8 11 15">1</name>
        <sequence type="displayed"/>
    </isoform>
    <isoform>
        <id>Q8K4D7-2</id>
        <name evidence="8">2</name>
        <sequence type="described" ref="VSP_052863"/>
    </isoform>
</comment>
<comment type="tissue specificity">
    <text evidence="7">Highly expressed in postpuberal testis, where expression is sperm cell-specific. Also expressed in brain of both sexes.</text>
</comment>
<comment type="domain">
    <text evidence="12 14 16 18">The EF-hand and C2 domains are essential for triggering Ca(2+) oscillating activity and the regulation of PLCZ1 enzyme activity.</text>
</comment>
<comment type="domain">
    <text evidence="12 14 16 18">The X-Y linker region between PI-PLC X-box and Y-box domains may be a target for proteolysis and may play an important regulatory role during fertilization.</text>
</comment>
<comment type="miscellaneous">
    <text>Transgenic mice, where broad ectopic expression is forced, initially appear healthy and their oocytes undergo unperturbed meiotic maturation to metaphase II but subsequently exhibit autonomous intracellular free calcium oscillations, second polar body extrusion, pronucleus formation and parthenogenetic development. Transgenic males remained largely asymptomatic, whereas transgenic females develop abdominal swellings caused by benign ovarian teratomas.</text>
</comment>
<organism>
    <name type="scientific">Mus musculus</name>
    <name type="common">Mouse</name>
    <dbReference type="NCBI Taxonomy" id="10090"/>
    <lineage>
        <taxon>Eukaryota</taxon>
        <taxon>Metazoa</taxon>
        <taxon>Chordata</taxon>
        <taxon>Craniata</taxon>
        <taxon>Vertebrata</taxon>
        <taxon>Euteleostomi</taxon>
        <taxon>Mammalia</taxon>
        <taxon>Eutheria</taxon>
        <taxon>Euarchontoglires</taxon>
        <taxon>Glires</taxon>
        <taxon>Rodentia</taxon>
        <taxon>Myomorpha</taxon>
        <taxon>Muroidea</taxon>
        <taxon>Muridae</taxon>
        <taxon>Murinae</taxon>
        <taxon>Mus</taxon>
        <taxon>Mus</taxon>
    </lineage>
</organism>
<keyword id="KW-0025">Alternative splicing</keyword>
<keyword id="KW-0106">Calcium</keyword>
<keyword id="KW-0963">Cytoplasm</keyword>
<keyword id="KW-0217">Developmental protein</keyword>
<keyword id="KW-0278">Fertilization</keyword>
<keyword id="KW-0378">Hydrolase</keyword>
<keyword id="KW-0442">Lipid degradation</keyword>
<keyword id="KW-0443">Lipid metabolism</keyword>
<keyword id="KW-0539">Nucleus</keyword>
<keyword id="KW-1185">Reference proteome</keyword>
<keyword id="KW-0807">Transducer</keyword>